<accession>Q5MGE6</accession>
<protein>
    <recommendedName>
        <fullName>Defense protein 3</fullName>
        <shortName>DFP-3</shortName>
    </recommendedName>
</protein>
<reference key="1">
    <citation type="journal article" date="2005" name="Gene">
        <title>A catalog for the transcripts from the venomous structures of the caterpillar Lonomia obliqua: identification of the proteins potentially involved in the coagulation disorder and hemorrhagic syndrome.</title>
        <authorList>
            <person name="Veiga A.B.G."/>
            <person name="Ribeiro J.M.C."/>
            <person name="Guimaraes J.A."/>
            <person name="Francischetti I.M.B."/>
        </authorList>
    </citation>
    <scope>NUCLEOTIDE SEQUENCE [LARGE SCALE MRNA]</scope>
    <source>
        <tissue>Spicule</tissue>
    </source>
</reference>
<evidence type="ECO:0000250" key="1"/>
<evidence type="ECO:0000255" key="2"/>
<evidence type="ECO:0000305" key="3"/>
<keyword id="KW-0044">Antibiotic</keyword>
<keyword id="KW-0929">Antimicrobial</keyword>
<keyword id="KW-0165">Cleavage on pair of basic residues</keyword>
<keyword id="KW-0391">Immunity</keyword>
<keyword id="KW-0399">Innate immunity</keyword>
<keyword id="KW-0964">Secreted</keyword>
<keyword id="KW-0732">Signal</keyword>
<comment type="function">
    <text evidence="1">Has antibacterial activity against both Gram-positive and Gram-negative bacteria.</text>
</comment>
<comment type="subcellular location">
    <subcellularLocation>
        <location evidence="1">Secreted</location>
    </subcellularLocation>
</comment>
<comment type="similarity">
    <text evidence="3">Belongs to the attacin/sarcotoxin-2 family.</text>
</comment>
<feature type="signal peptide" evidence="2">
    <location>
        <begin position="1"/>
        <end position="17"/>
    </location>
</feature>
<feature type="propeptide" id="PRO_0000372777" evidence="1">
    <location>
        <begin position="18"/>
        <end position="45"/>
    </location>
</feature>
<feature type="chain" id="PRO_0000372778" description="Defense protein 3">
    <location>
        <begin position="46"/>
        <end position="233"/>
    </location>
</feature>
<organism>
    <name type="scientific">Lonomia obliqua</name>
    <name type="common">Moth</name>
    <dbReference type="NCBI Taxonomy" id="304329"/>
    <lineage>
        <taxon>Eukaryota</taxon>
        <taxon>Metazoa</taxon>
        <taxon>Ecdysozoa</taxon>
        <taxon>Arthropoda</taxon>
        <taxon>Hexapoda</taxon>
        <taxon>Insecta</taxon>
        <taxon>Pterygota</taxon>
        <taxon>Neoptera</taxon>
        <taxon>Endopterygota</taxon>
        <taxon>Lepidoptera</taxon>
        <taxon>Glossata</taxon>
        <taxon>Ditrysia</taxon>
        <taxon>Bombycoidea</taxon>
        <taxon>Saturniidae</taxon>
        <taxon>Hemileucinae</taxon>
        <taxon>Lonomia</taxon>
    </lineage>
</organism>
<name>DFP3_LONON</name>
<proteinExistence type="evidence at transcript level"/>
<dbReference type="EMBL" id="AY829840">
    <property type="protein sequence ID" value="AAV91454.1"/>
    <property type="molecule type" value="mRNA"/>
</dbReference>
<dbReference type="GO" id="GO:0005576">
    <property type="term" value="C:extracellular region"/>
    <property type="evidence" value="ECO:0007669"/>
    <property type="project" value="UniProtKB-SubCell"/>
</dbReference>
<dbReference type="GO" id="GO:0042742">
    <property type="term" value="P:defense response to bacterium"/>
    <property type="evidence" value="ECO:0007669"/>
    <property type="project" value="UniProtKB-KW"/>
</dbReference>
<dbReference type="GO" id="GO:0045087">
    <property type="term" value="P:innate immune response"/>
    <property type="evidence" value="ECO:0007669"/>
    <property type="project" value="UniProtKB-KW"/>
</dbReference>
<dbReference type="InterPro" id="IPR005521">
    <property type="entry name" value="Attacin_C"/>
</dbReference>
<dbReference type="InterPro" id="IPR005520">
    <property type="entry name" value="Attacin_N"/>
</dbReference>
<dbReference type="Pfam" id="PF03769">
    <property type="entry name" value="Attacin_C"/>
    <property type="match status" value="1"/>
</dbReference>
<dbReference type="Pfam" id="PF03768">
    <property type="entry name" value="Attacin_N"/>
    <property type="match status" value="1"/>
</dbReference>
<sequence length="233" mass="25053">MFGKFVLLAVLLVGVNSRYVIIEDPVYYIEDHELPEQWTSSRVRRDAHGAVTLNTDGTSGAVVKVPIAGSDKNIVSAIGSVDLTDRLKVGAATAGLAIDNVNGHGASITDTHIPGFGDKLTAAGKINLIHNDNHDLTANAFATRNMPSIPLVPDFNTVGGGIDYMFKDKIGASASVAHTDLINRNDYSLGGKLNLFKTPDTSVDFNAGWKKFDTPVINSNWEPNFGFSLSKYF</sequence>